<feature type="chain" id="PRO_1000188804" description="Acyl carrier protein phosphodiesterase">
    <location>
        <begin position="1"/>
        <end position="193"/>
    </location>
</feature>
<dbReference type="EC" id="3.1.4.14" evidence="1"/>
<dbReference type="EMBL" id="CP000948">
    <property type="protein sequence ID" value="ACB01532.1"/>
    <property type="molecule type" value="Genomic_DNA"/>
</dbReference>
<dbReference type="RefSeq" id="WP_001009885.1">
    <property type="nucleotide sequence ID" value="NC_010473.1"/>
</dbReference>
<dbReference type="SMR" id="B1XEZ2"/>
<dbReference type="KEGG" id="ecd:ECDH10B_0360"/>
<dbReference type="HOGENOM" id="CLU_099370_1_0_6"/>
<dbReference type="GO" id="GO:0008770">
    <property type="term" value="F:[acyl-carrier-protein] phosphodiesterase activity"/>
    <property type="evidence" value="ECO:0007669"/>
    <property type="project" value="UniProtKB-UniRule"/>
</dbReference>
<dbReference type="GO" id="GO:0006633">
    <property type="term" value="P:fatty acid biosynthetic process"/>
    <property type="evidence" value="ECO:0007669"/>
    <property type="project" value="UniProtKB-UniRule"/>
</dbReference>
<dbReference type="HAMAP" id="MF_01950">
    <property type="entry name" value="AcpH"/>
    <property type="match status" value="1"/>
</dbReference>
<dbReference type="InterPro" id="IPR007431">
    <property type="entry name" value="ACP_PD"/>
</dbReference>
<dbReference type="InterPro" id="IPR023491">
    <property type="entry name" value="ACP_phosphodiesterase_gpbac"/>
</dbReference>
<dbReference type="NCBIfam" id="NF007466">
    <property type="entry name" value="PRK10045.1"/>
    <property type="match status" value="1"/>
</dbReference>
<dbReference type="PANTHER" id="PTHR38764">
    <property type="entry name" value="ACYL CARRIER PROTEIN PHOSPHODIESTERASE"/>
    <property type="match status" value="1"/>
</dbReference>
<dbReference type="PANTHER" id="PTHR38764:SF1">
    <property type="entry name" value="ACYL CARRIER PROTEIN PHOSPHODIESTERASE"/>
    <property type="match status" value="1"/>
</dbReference>
<dbReference type="Pfam" id="PF04336">
    <property type="entry name" value="ACP_PD"/>
    <property type="match status" value="1"/>
</dbReference>
<dbReference type="PIRSF" id="PIRSF011489">
    <property type="entry name" value="DUF479"/>
    <property type="match status" value="1"/>
</dbReference>
<protein>
    <recommendedName>
        <fullName evidence="1">Acyl carrier protein phosphodiesterase</fullName>
        <shortName evidence="1">ACP phosphodiesterase</shortName>
        <ecNumber evidence="1">3.1.4.14</ecNumber>
    </recommendedName>
</protein>
<keyword id="KW-0275">Fatty acid biosynthesis</keyword>
<keyword id="KW-0276">Fatty acid metabolism</keyword>
<keyword id="KW-0378">Hydrolase</keyword>
<keyword id="KW-0444">Lipid biosynthesis</keyword>
<keyword id="KW-0443">Lipid metabolism</keyword>
<reference key="1">
    <citation type="journal article" date="2008" name="J. Bacteriol.">
        <title>The complete genome sequence of Escherichia coli DH10B: insights into the biology of a laboratory workhorse.</title>
        <authorList>
            <person name="Durfee T."/>
            <person name="Nelson R."/>
            <person name="Baldwin S."/>
            <person name="Plunkett G. III"/>
            <person name="Burland V."/>
            <person name="Mau B."/>
            <person name="Petrosino J.F."/>
            <person name="Qin X."/>
            <person name="Muzny D.M."/>
            <person name="Ayele M."/>
            <person name="Gibbs R.A."/>
            <person name="Csorgo B."/>
            <person name="Posfai G."/>
            <person name="Weinstock G.M."/>
            <person name="Blattner F.R."/>
        </authorList>
    </citation>
    <scope>NUCLEOTIDE SEQUENCE [LARGE SCALE GENOMIC DNA]</scope>
    <source>
        <strain>K12 / DH10B</strain>
    </source>
</reference>
<name>ACPH_ECODH</name>
<gene>
    <name evidence="1" type="primary">acpH</name>
    <name type="ordered locus">ECDH10B_0360</name>
</gene>
<organism>
    <name type="scientific">Escherichia coli (strain K12 / DH10B)</name>
    <dbReference type="NCBI Taxonomy" id="316385"/>
    <lineage>
        <taxon>Bacteria</taxon>
        <taxon>Pseudomonadati</taxon>
        <taxon>Pseudomonadota</taxon>
        <taxon>Gammaproteobacteria</taxon>
        <taxon>Enterobacterales</taxon>
        <taxon>Enterobacteriaceae</taxon>
        <taxon>Escherichia</taxon>
    </lineage>
</organism>
<proteinExistence type="inferred from homology"/>
<accession>B1XEZ2</accession>
<sequence length="193" mass="22961">MNFLAHLHLAHLAESSLSGNLLADFVRGNPEESFPPDVVAGIHMHRRIDVLTDNLPEVREAREWFRSETRRVAPITLDVMWDHFLSRHWSQLSPDFPLQEFVCYAREQVMTILPDSPPRFINLNNYLWSEQWLVRYRDMDFIQNVLNGMASRRPRLDALRDSWYDLDAHYDALETRFWQFYPRMMAQASRKAL</sequence>
<evidence type="ECO:0000255" key="1">
    <source>
        <dbReference type="HAMAP-Rule" id="MF_01950"/>
    </source>
</evidence>
<comment type="function">
    <text evidence="1">Converts holo-ACP to apo-ACP by hydrolytic cleavage of the phosphopantetheine prosthetic group from ACP.</text>
</comment>
<comment type="catalytic activity">
    <reaction evidence="1">
        <text>holo-[ACP] + H2O = apo-[ACP] + (R)-4'-phosphopantetheine + H(+)</text>
        <dbReference type="Rhea" id="RHEA:20537"/>
        <dbReference type="Rhea" id="RHEA-COMP:9685"/>
        <dbReference type="Rhea" id="RHEA-COMP:9690"/>
        <dbReference type="ChEBI" id="CHEBI:15377"/>
        <dbReference type="ChEBI" id="CHEBI:15378"/>
        <dbReference type="ChEBI" id="CHEBI:29999"/>
        <dbReference type="ChEBI" id="CHEBI:61723"/>
        <dbReference type="ChEBI" id="CHEBI:64479"/>
        <dbReference type="EC" id="3.1.4.14"/>
    </reaction>
</comment>
<comment type="similarity">
    <text evidence="1">Belongs to the AcpH family.</text>
</comment>